<feature type="chain" id="PRO_0000126916" description="Phenylalanine--tRNA ligase beta subunit">
    <location>
        <begin position="1"/>
        <end position="831"/>
    </location>
</feature>
<feature type="domain" description="tRNA-binding">
    <location>
        <begin position="44"/>
        <end position="155"/>
    </location>
</feature>
<feature type="domain" description="B5">
    <location>
        <begin position="414"/>
        <end position="489"/>
    </location>
</feature>
<feature type="domain" description="FDX-ACB">
    <location>
        <begin position="737"/>
        <end position="830"/>
    </location>
</feature>
<feature type="binding site" evidence="1">
    <location>
        <position position="467"/>
    </location>
    <ligand>
        <name>Mg(2+)</name>
        <dbReference type="ChEBI" id="CHEBI:18420"/>
        <note>shared with alpha subunit</note>
    </ligand>
</feature>
<feature type="binding site" evidence="1">
    <location>
        <position position="473"/>
    </location>
    <ligand>
        <name>Mg(2+)</name>
        <dbReference type="ChEBI" id="CHEBI:18420"/>
        <note>shared with alpha subunit</note>
    </ligand>
</feature>
<feature type="binding site" evidence="1">
    <location>
        <position position="476"/>
    </location>
    <ligand>
        <name>Mg(2+)</name>
        <dbReference type="ChEBI" id="CHEBI:18420"/>
        <note>shared with alpha subunit</note>
    </ligand>
</feature>
<feature type="binding site" evidence="1">
    <location>
        <position position="477"/>
    </location>
    <ligand>
        <name>Mg(2+)</name>
        <dbReference type="ChEBI" id="CHEBI:18420"/>
        <note>shared with alpha subunit</note>
    </ligand>
</feature>
<feature type="strand" evidence="4">
    <location>
        <begin position="1"/>
        <end position="4"/>
    </location>
</feature>
<feature type="helix" evidence="4">
    <location>
        <begin position="5"/>
        <end position="15"/>
    </location>
</feature>
<feature type="helix" evidence="4">
    <location>
        <begin position="23"/>
        <end position="33"/>
    </location>
</feature>
<feature type="strand" evidence="4">
    <location>
        <begin position="36"/>
        <end position="42"/>
    </location>
</feature>
<feature type="strand" evidence="4">
    <location>
        <begin position="47"/>
        <end position="61"/>
    </location>
</feature>
<feature type="strand" evidence="4">
    <location>
        <begin position="63"/>
        <end position="66"/>
    </location>
</feature>
<feature type="strand" evidence="4">
    <location>
        <begin position="68"/>
        <end position="74"/>
    </location>
</feature>
<feature type="strand" evidence="4">
    <location>
        <begin position="80"/>
        <end position="85"/>
    </location>
</feature>
<feature type="strand" evidence="4">
    <location>
        <begin position="95"/>
        <end position="99"/>
    </location>
</feature>
<feature type="turn" evidence="4">
    <location>
        <begin position="106"/>
        <end position="108"/>
    </location>
</feature>
<feature type="strand" evidence="4">
    <location>
        <begin position="114"/>
        <end position="116"/>
    </location>
</feature>
<feature type="strand" evidence="4">
    <location>
        <begin position="119"/>
        <end position="125"/>
    </location>
</feature>
<feature type="turn" evidence="4">
    <location>
        <begin position="128"/>
        <end position="132"/>
    </location>
</feature>
<feature type="strand" evidence="4">
    <location>
        <begin position="133"/>
        <end position="135"/>
    </location>
</feature>
<feature type="helix" evidence="4">
    <location>
        <begin position="154"/>
        <end position="158"/>
    </location>
</feature>
<feature type="turn" evidence="4">
    <location>
        <begin position="159"/>
        <end position="161"/>
    </location>
</feature>
<feature type="strand" evidence="4">
    <location>
        <begin position="163"/>
        <end position="168"/>
    </location>
</feature>
<feature type="helix" evidence="4">
    <location>
        <begin position="174"/>
        <end position="176"/>
    </location>
</feature>
<feature type="helix" evidence="4">
    <location>
        <begin position="179"/>
        <end position="189"/>
    </location>
</feature>
<feature type="turn" evidence="4">
    <location>
        <begin position="200"/>
        <end position="202"/>
    </location>
</feature>
<feature type="strand" evidence="4">
    <location>
        <begin position="215"/>
        <end position="217"/>
    </location>
</feature>
<feature type="helix" evidence="3">
    <location>
        <begin position="219"/>
        <end position="221"/>
    </location>
</feature>
<feature type="strand" evidence="4">
    <location>
        <begin position="225"/>
        <end position="233"/>
    </location>
</feature>
<feature type="helix" evidence="4">
    <location>
        <begin position="242"/>
        <end position="250"/>
    </location>
</feature>
<feature type="helix" evidence="4">
    <location>
        <begin position="258"/>
        <end position="270"/>
    </location>
</feature>
<feature type="strand" evidence="4">
    <location>
        <begin position="275"/>
        <end position="278"/>
    </location>
</feature>
<feature type="helix" evidence="4">
    <location>
        <begin position="279"/>
        <end position="281"/>
    </location>
</feature>
<feature type="strand" evidence="4">
    <location>
        <begin position="286"/>
        <end position="290"/>
    </location>
</feature>
<feature type="strand" evidence="4">
    <location>
        <begin position="296"/>
        <end position="299"/>
    </location>
</feature>
<feature type="strand" evidence="4">
    <location>
        <begin position="304"/>
        <end position="306"/>
    </location>
</feature>
<feature type="strand" evidence="4">
    <location>
        <begin position="312"/>
        <end position="315"/>
    </location>
</feature>
<feature type="strand" evidence="4">
    <location>
        <begin position="317"/>
        <end position="323"/>
    </location>
</feature>
<feature type="turn" evidence="4">
    <location>
        <begin position="324"/>
        <end position="326"/>
    </location>
</feature>
<feature type="strand" evidence="4">
    <location>
        <begin position="327"/>
        <end position="329"/>
    </location>
</feature>
<feature type="helix" evidence="3">
    <location>
        <begin position="330"/>
        <end position="332"/>
    </location>
</feature>
<feature type="strand" evidence="4">
    <location>
        <begin position="341"/>
        <end position="347"/>
    </location>
</feature>
<feature type="helix" evidence="4">
    <location>
        <begin position="350"/>
        <end position="360"/>
    </location>
</feature>
<feature type="helix" evidence="4">
    <location>
        <begin position="365"/>
        <end position="370"/>
    </location>
</feature>
<feature type="helix" evidence="4">
    <location>
        <begin position="376"/>
        <end position="378"/>
    </location>
</feature>
<feature type="helix" evidence="4">
    <location>
        <begin position="379"/>
        <end position="394"/>
    </location>
</feature>
<feature type="strand" evidence="4">
    <location>
        <begin position="403"/>
        <end position="405"/>
    </location>
</feature>
<feature type="turn" evidence="4">
    <location>
        <begin position="407"/>
        <end position="410"/>
    </location>
</feature>
<feature type="strand" evidence="4">
    <location>
        <begin position="419"/>
        <end position="422"/>
    </location>
</feature>
<feature type="helix" evidence="4">
    <location>
        <begin position="425"/>
        <end position="430"/>
    </location>
</feature>
<feature type="helix" evidence="4">
    <location>
        <begin position="438"/>
        <end position="445"/>
    </location>
</feature>
<feature type="strand" evidence="4">
    <location>
        <begin position="449"/>
        <end position="453"/>
    </location>
</feature>
<feature type="strand" evidence="4">
    <location>
        <begin position="456"/>
        <end position="460"/>
    </location>
</feature>
<feature type="helix" evidence="4">
    <location>
        <begin position="471"/>
        <end position="482"/>
    </location>
</feature>
<feature type="helix" evidence="4">
    <location>
        <begin position="484"/>
        <end position="486"/>
    </location>
</feature>
<feature type="helix" evidence="4">
    <location>
        <begin position="502"/>
        <end position="516"/>
    </location>
</feature>
<feature type="helix" evidence="4">
    <location>
        <begin position="532"/>
        <end position="536"/>
    </location>
</feature>
<feature type="helix" evidence="4">
    <location>
        <begin position="543"/>
        <end position="545"/>
    </location>
</feature>
<feature type="strand" evidence="4">
    <location>
        <begin position="549"/>
        <end position="552"/>
    </location>
</feature>
<feature type="strand" evidence="3">
    <location>
        <begin position="563"/>
        <end position="565"/>
    </location>
</feature>
<feature type="helix" evidence="4">
    <location>
        <begin position="566"/>
        <end position="578"/>
    </location>
</feature>
<feature type="strand" evidence="4">
    <location>
        <begin position="583"/>
        <end position="591"/>
    </location>
</feature>
<feature type="strand" evidence="3">
    <location>
        <begin position="596"/>
        <end position="598"/>
    </location>
</feature>
<feature type="strand" evidence="5">
    <location>
        <begin position="607"/>
        <end position="609"/>
    </location>
</feature>
<feature type="helix" evidence="4">
    <location>
        <begin position="613"/>
        <end position="622"/>
    </location>
</feature>
<feature type="strand" evidence="4">
    <location>
        <begin position="628"/>
        <end position="639"/>
    </location>
</feature>
<feature type="helix" evidence="4">
    <location>
        <begin position="652"/>
        <end position="666"/>
    </location>
</feature>
<feature type="strand" evidence="4">
    <location>
        <begin position="671"/>
        <end position="674"/>
    </location>
</feature>
<feature type="strand" evidence="4">
    <location>
        <begin position="680"/>
        <end position="690"/>
    </location>
</feature>
<feature type="strand" evidence="4">
    <location>
        <begin position="693"/>
        <end position="701"/>
    </location>
</feature>
<feature type="helix" evidence="4">
    <location>
        <begin position="703"/>
        <end position="709"/>
    </location>
</feature>
<feature type="strand" evidence="4">
    <location>
        <begin position="716"/>
        <end position="721"/>
    </location>
</feature>
<feature type="helix" evidence="4">
    <location>
        <begin position="722"/>
        <end position="724"/>
    </location>
</feature>
<feature type="strand" evidence="4">
    <location>
        <begin position="742"/>
        <end position="751"/>
    </location>
</feature>
<feature type="helix" evidence="4">
    <location>
        <begin position="756"/>
        <end position="767"/>
    </location>
</feature>
<feature type="helix" evidence="3">
    <location>
        <begin position="768"/>
        <end position="770"/>
    </location>
</feature>
<feature type="strand" evidence="4">
    <location>
        <begin position="771"/>
        <end position="780"/>
    </location>
</feature>
<feature type="helix" evidence="3">
    <location>
        <begin position="783"/>
        <end position="785"/>
    </location>
</feature>
<feature type="strand" evidence="4">
    <location>
        <begin position="789"/>
        <end position="798"/>
    </location>
</feature>
<feature type="strand" evidence="4">
    <location>
        <begin position="801"/>
        <end position="803"/>
    </location>
</feature>
<feature type="helix" evidence="4">
    <location>
        <begin position="807"/>
        <end position="825"/>
    </location>
</feature>
<feature type="strand" evidence="3">
    <location>
        <begin position="828"/>
        <end position="831"/>
    </location>
</feature>
<keyword id="KW-0002">3D-structure</keyword>
<keyword id="KW-0030">Aminoacyl-tRNA synthetase</keyword>
<keyword id="KW-0067">ATP-binding</keyword>
<keyword id="KW-0963">Cytoplasm</keyword>
<keyword id="KW-0436">Ligase</keyword>
<keyword id="KW-0460">Magnesium</keyword>
<keyword id="KW-0479">Metal-binding</keyword>
<keyword id="KW-0547">Nucleotide-binding</keyword>
<keyword id="KW-0648">Protein biosynthesis</keyword>
<keyword id="KW-1185">Reference proteome</keyword>
<keyword id="KW-0694">RNA-binding</keyword>
<keyword id="KW-0820">tRNA-binding</keyword>
<name>SYFB_MYCTU</name>
<comment type="catalytic activity">
    <reaction>
        <text>tRNA(Phe) + L-phenylalanine + ATP = L-phenylalanyl-tRNA(Phe) + AMP + diphosphate + H(+)</text>
        <dbReference type="Rhea" id="RHEA:19413"/>
        <dbReference type="Rhea" id="RHEA-COMP:9668"/>
        <dbReference type="Rhea" id="RHEA-COMP:9699"/>
        <dbReference type="ChEBI" id="CHEBI:15378"/>
        <dbReference type="ChEBI" id="CHEBI:30616"/>
        <dbReference type="ChEBI" id="CHEBI:33019"/>
        <dbReference type="ChEBI" id="CHEBI:58095"/>
        <dbReference type="ChEBI" id="CHEBI:78442"/>
        <dbReference type="ChEBI" id="CHEBI:78531"/>
        <dbReference type="ChEBI" id="CHEBI:456215"/>
        <dbReference type="EC" id="6.1.1.20"/>
    </reaction>
</comment>
<comment type="cofactor">
    <cofactor evidence="1">
        <name>Mg(2+)</name>
        <dbReference type="ChEBI" id="CHEBI:18420"/>
    </cofactor>
    <text evidence="1">Binds 2 magnesium ions per tetramer.</text>
</comment>
<comment type="subunit">
    <text evidence="1">Tetramer of two alpha and two beta subunits.</text>
</comment>
<comment type="subcellular location">
    <subcellularLocation>
        <location evidence="1">Cytoplasm</location>
    </subcellularLocation>
</comment>
<comment type="miscellaneous">
    <text>Was identified as a high-confidence drug target.</text>
</comment>
<comment type="similarity">
    <text evidence="2">Belongs to the phenylalanyl-tRNA synthetase beta subunit family. Type 1 subfamily.</text>
</comment>
<proteinExistence type="evidence at protein level"/>
<reference key="1">
    <citation type="journal article" date="1998" name="Nature">
        <title>Deciphering the biology of Mycobacterium tuberculosis from the complete genome sequence.</title>
        <authorList>
            <person name="Cole S.T."/>
            <person name="Brosch R."/>
            <person name="Parkhill J."/>
            <person name="Garnier T."/>
            <person name="Churcher C.M."/>
            <person name="Harris D.E."/>
            <person name="Gordon S.V."/>
            <person name="Eiglmeier K."/>
            <person name="Gas S."/>
            <person name="Barry C.E. III"/>
            <person name="Tekaia F."/>
            <person name="Badcock K."/>
            <person name="Basham D."/>
            <person name="Brown D."/>
            <person name="Chillingworth T."/>
            <person name="Connor R."/>
            <person name="Davies R.M."/>
            <person name="Devlin K."/>
            <person name="Feltwell T."/>
            <person name="Gentles S."/>
            <person name="Hamlin N."/>
            <person name="Holroyd S."/>
            <person name="Hornsby T."/>
            <person name="Jagels K."/>
            <person name="Krogh A."/>
            <person name="McLean J."/>
            <person name="Moule S."/>
            <person name="Murphy L.D."/>
            <person name="Oliver S."/>
            <person name="Osborne J."/>
            <person name="Quail M.A."/>
            <person name="Rajandream M.A."/>
            <person name="Rogers J."/>
            <person name="Rutter S."/>
            <person name="Seeger K."/>
            <person name="Skelton S."/>
            <person name="Squares S."/>
            <person name="Squares R."/>
            <person name="Sulston J.E."/>
            <person name="Taylor K."/>
            <person name="Whitehead S."/>
            <person name="Barrell B.G."/>
        </authorList>
    </citation>
    <scope>NUCLEOTIDE SEQUENCE [LARGE SCALE GENOMIC DNA]</scope>
    <source>
        <strain>ATCC 25618 / H37Rv</strain>
    </source>
</reference>
<reference key="2">
    <citation type="journal article" date="2008" name="BMC Syst. Biol.">
        <title>targetTB: a target identification pipeline for Mycobacterium tuberculosis through an interactome, reactome and genome-scale structural analysis.</title>
        <authorList>
            <person name="Raman K."/>
            <person name="Yeturu K."/>
            <person name="Chandra N."/>
        </authorList>
    </citation>
    <scope>IDENTIFICATION AS A DRUG TARGET [LARGE SCALE ANALYSIS]</scope>
</reference>
<reference key="3">
    <citation type="journal article" date="2011" name="Mol. Cell. Proteomics">
        <title>Proteogenomic analysis of Mycobacterium tuberculosis by high resolution mass spectrometry.</title>
        <authorList>
            <person name="Kelkar D.S."/>
            <person name="Kumar D."/>
            <person name="Kumar P."/>
            <person name="Balakrishnan L."/>
            <person name="Muthusamy B."/>
            <person name="Yadav A.K."/>
            <person name="Shrivastava P."/>
            <person name="Marimuthu A."/>
            <person name="Anand S."/>
            <person name="Sundaram H."/>
            <person name="Kingsbury R."/>
            <person name="Harsha H.C."/>
            <person name="Nair B."/>
            <person name="Prasad T.S."/>
            <person name="Chauhan D.S."/>
            <person name="Katoch K."/>
            <person name="Katoch V.M."/>
            <person name="Kumar P."/>
            <person name="Chaerkady R."/>
            <person name="Ramachandran S."/>
            <person name="Dash D."/>
            <person name="Pandey A."/>
        </authorList>
    </citation>
    <scope>IDENTIFICATION BY MASS SPECTROMETRY [LARGE SCALE ANALYSIS]</scope>
    <source>
        <strain>ATCC 25618 / H37Rv</strain>
    </source>
</reference>
<protein>
    <recommendedName>
        <fullName>Phenylalanine--tRNA ligase beta subunit</fullName>
        <ecNumber>6.1.1.20</ecNumber>
    </recommendedName>
    <alternativeName>
        <fullName>Phenylalanyl-tRNA synthetase beta subunit</fullName>
        <shortName>PheRS</shortName>
    </alternativeName>
</protein>
<gene>
    <name type="primary">pheT</name>
    <name type="ordered locus">Rv1650</name>
    <name type="ORF">MTCY06H11.15</name>
</gene>
<organism>
    <name type="scientific">Mycobacterium tuberculosis (strain ATCC 25618 / H37Rv)</name>
    <dbReference type="NCBI Taxonomy" id="83332"/>
    <lineage>
        <taxon>Bacteria</taxon>
        <taxon>Bacillati</taxon>
        <taxon>Actinomycetota</taxon>
        <taxon>Actinomycetes</taxon>
        <taxon>Mycobacteriales</taxon>
        <taxon>Mycobacteriaceae</taxon>
        <taxon>Mycobacterium</taxon>
        <taxon>Mycobacterium tuberculosis complex</taxon>
    </lineage>
</organism>
<dbReference type="EC" id="6.1.1.20"/>
<dbReference type="EMBL" id="AL123456">
    <property type="protein sequence ID" value="CCP44415.1"/>
    <property type="molecule type" value="Genomic_DNA"/>
</dbReference>
<dbReference type="PIR" id="E70620">
    <property type="entry name" value="E70620"/>
</dbReference>
<dbReference type="RefSeq" id="NP_216166.1">
    <property type="nucleotide sequence ID" value="NC_000962.3"/>
</dbReference>
<dbReference type="RefSeq" id="WP_003901220.1">
    <property type="nucleotide sequence ID" value="NZ_NVQJ01000016.1"/>
</dbReference>
<dbReference type="PDB" id="7DAW">
    <property type="method" value="X-ray"/>
    <property type="resolution" value="2.83 A"/>
    <property type="chains" value="B=1-831"/>
</dbReference>
<dbReference type="PDB" id="7DB7">
    <property type="method" value="X-ray"/>
    <property type="resolution" value="2.71 A"/>
    <property type="chains" value="B=1-831"/>
</dbReference>
<dbReference type="PDB" id="7DB8">
    <property type="method" value="X-ray"/>
    <property type="resolution" value="2.30 A"/>
    <property type="chains" value="B=1-831"/>
</dbReference>
<dbReference type="PDB" id="7K98">
    <property type="method" value="X-ray"/>
    <property type="resolution" value="2.19 A"/>
    <property type="chains" value="B/E=1-831"/>
</dbReference>
<dbReference type="PDB" id="7K9M">
    <property type="method" value="X-ray"/>
    <property type="resolution" value="2.50 A"/>
    <property type="chains" value="B=1-831"/>
</dbReference>
<dbReference type="PDB" id="7KA0">
    <property type="method" value="X-ray"/>
    <property type="resolution" value="2.40 A"/>
    <property type="chains" value="B/E=1-831"/>
</dbReference>
<dbReference type="PDB" id="7KAB">
    <property type="method" value="X-ray"/>
    <property type="resolution" value="2.50 A"/>
    <property type="chains" value="B=1-831"/>
</dbReference>
<dbReference type="PDB" id="9DRS">
    <property type="method" value="X-ray"/>
    <property type="resolution" value="2.35 A"/>
    <property type="chains" value="B/E=1-831"/>
</dbReference>
<dbReference type="PDB" id="9DRV">
    <property type="method" value="X-ray"/>
    <property type="resolution" value="2.46 A"/>
    <property type="chains" value="B/E=1-831"/>
</dbReference>
<dbReference type="PDBsum" id="7DAW"/>
<dbReference type="PDBsum" id="7DB7"/>
<dbReference type="PDBsum" id="7DB8"/>
<dbReference type="PDBsum" id="7K98"/>
<dbReference type="PDBsum" id="7K9M"/>
<dbReference type="PDBsum" id="7KA0"/>
<dbReference type="PDBsum" id="7KAB"/>
<dbReference type="PDBsum" id="9DRS"/>
<dbReference type="PDBsum" id="9DRV"/>
<dbReference type="SMR" id="P9WFU1"/>
<dbReference type="FunCoup" id="P9WFU1">
    <property type="interactions" value="61"/>
</dbReference>
<dbReference type="STRING" id="83332.Rv1650"/>
<dbReference type="PaxDb" id="83332-Rv1650"/>
<dbReference type="DNASU" id="885283"/>
<dbReference type="GeneID" id="885283"/>
<dbReference type="KEGG" id="mtu:Rv1650"/>
<dbReference type="KEGG" id="mtv:RVBD_1650"/>
<dbReference type="TubercuList" id="Rv1650"/>
<dbReference type="eggNOG" id="COG0072">
    <property type="taxonomic scope" value="Bacteria"/>
</dbReference>
<dbReference type="eggNOG" id="COG0073">
    <property type="taxonomic scope" value="Bacteria"/>
</dbReference>
<dbReference type="InParanoid" id="P9WFU1"/>
<dbReference type="OrthoDB" id="9805455at2"/>
<dbReference type="PhylomeDB" id="P9WFU1"/>
<dbReference type="Proteomes" id="UP000001584">
    <property type="component" value="Chromosome"/>
</dbReference>
<dbReference type="GO" id="GO:0009274">
    <property type="term" value="C:peptidoglycan-based cell wall"/>
    <property type="evidence" value="ECO:0007005"/>
    <property type="project" value="MTBBASE"/>
</dbReference>
<dbReference type="GO" id="GO:0009328">
    <property type="term" value="C:phenylalanine-tRNA ligase complex"/>
    <property type="evidence" value="ECO:0000318"/>
    <property type="project" value="GO_Central"/>
</dbReference>
<dbReference type="GO" id="GO:0005886">
    <property type="term" value="C:plasma membrane"/>
    <property type="evidence" value="ECO:0007005"/>
    <property type="project" value="MTBBASE"/>
</dbReference>
<dbReference type="GO" id="GO:0005524">
    <property type="term" value="F:ATP binding"/>
    <property type="evidence" value="ECO:0007669"/>
    <property type="project" value="UniProtKB-UniRule"/>
</dbReference>
<dbReference type="GO" id="GO:0000287">
    <property type="term" value="F:magnesium ion binding"/>
    <property type="evidence" value="ECO:0007669"/>
    <property type="project" value="UniProtKB-UniRule"/>
</dbReference>
<dbReference type="GO" id="GO:0004826">
    <property type="term" value="F:phenylalanine-tRNA ligase activity"/>
    <property type="evidence" value="ECO:0007669"/>
    <property type="project" value="UniProtKB-UniRule"/>
</dbReference>
<dbReference type="GO" id="GO:0000049">
    <property type="term" value="F:tRNA binding"/>
    <property type="evidence" value="ECO:0007669"/>
    <property type="project" value="UniProtKB-KW"/>
</dbReference>
<dbReference type="GO" id="GO:0006432">
    <property type="term" value="P:phenylalanyl-tRNA aminoacylation"/>
    <property type="evidence" value="ECO:0000318"/>
    <property type="project" value="GO_Central"/>
</dbReference>
<dbReference type="CDD" id="cd00769">
    <property type="entry name" value="PheRS_beta_core"/>
    <property type="match status" value="1"/>
</dbReference>
<dbReference type="CDD" id="cd02796">
    <property type="entry name" value="tRNA_bind_bactPheRS"/>
    <property type="match status" value="1"/>
</dbReference>
<dbReference type="FunFam" id="2.40.50.140:FF:000045">
    <property type="entry name" value="Phenylalanine--tRNA ligase beta subunit"/>
    <property type="match status" value="1"/>
</dbReference>
<dbReference type="FunFam" id="3.30.70.380:FF:000001">
    <property type="entry name" value="Phenylalanine--tRNA ligase beta subunit"/>
    <property type="match status" value="1"/>
</dbReference>
<dbReference type="FunFam" id="3.30.930.10:FF:000130">
    <property type="entry name" value="Phenylalanine--tRNA ligase beta subunit"/>
    <property type="match status" value="1"/>
</dbReference>
<dbReference type="Gene3D" id="3.30.56.10">
    <property type="match status" value="2"/>
</dbReference>
<dbReference type="Gene3D" id="3.30.930.10">
    <property type="entry name" value="Bira Bifunctional Protein, Domain 2"/>
    <property type="match status" value="1"/>
</dbReference>
<dbReference type="Gene3D" id="3.30.70.380">
    <property type="entry name" value="Ferrodoxin-fold anticodon-binding domain"/>
    <property type="match status" value="1"/>
</dbReference>
<dbReference type="Gene3D" id="2.40.50.140">
    <property type="entry name" value="Nucleic acid-binding proteins"/>
    <property type="match status" value="1"/>
</dbReference>
<dbReference type="Gene3D" id="3.50.40.10">
    <property type="entry name" value="Phenylalanyl-trna Synthetase, Chain B, domain 3"/>
    <property type="match status" value="1"/>
</dbReference>
<dbReference type="HAMAP" id="MF_00283">
    <property type="entry name" value="Phe_tRNA_synth_beta1"/>
    <property type="match status" value="1"/>
</dbReference>
<dbReference type="InterPro" id="IPR045864">
    <property type="entry name" value="aa-tRNA-synth_II/BPL/LPL"/>
</dbReference>
<dbReference type="InterPro" id="IPR005146">
    <property type="entry name" value="B3/B4_tRNA-bd"/>
</dbReference>
<dbReference type="InterPro" id="IPR009061">
    <property type="entry name" value="DNA-bd_dom_put_sf"/>
</dbReference>
<dbReference type="InterPro" id="IPR005121">
    <property type="entry name" value="Fdx_antiC-bd"/>
</dbReference>
<dbReference type="InterPro" id="IPR036690">
    <property type="entry name" value="Fdx_antiC-bd_sf"/>
</dbReference>
<dbReference type="InterPro" id="IPR012340">
    <property type="entry name" value="NA-bd_OB-fold"/>
</dbReference>
<dbReference type="InterPro" id="IPR045060">
    <property type="entry name" value="Phe-tRNA-ligase_IIc_bsu"/>
</dbReference>
<dbReference type="InterPro" id="IPR004532">
    <property type="entry name" value="Phe-tRNA-ligase_IIc_bsu_bact"/>
</dbReference>
<dbReference type="InterPro" id="IPR020825">
    <property type="entry name" value="Phe-tRNA_synthase-like_B3/B4"/>
</dbReference>
<dbReference type="InterPro" id="IPR041616">
    <property type="entry name" value="PheRS_beta_core"/>
</dbReference>
<dbReference type="InterPro" id="IPR002547">
    <property type="entry name" value="tRNA-bd_dom"/>
</dbReference>
<dbReference type="InterPro" id="IPR033714">
    <property type="entry name" value="tRNA_bind_bactPheRS"/>
</dbReference>
<dbReference type="InterPro" id="IPR005147">
    <property type="entry name" value="tRNA_synthase_B5-dom"/>
</dbReference>
<dbReference type="NCBIfam" id="TIGR00472">
    <property type="entry name" value="pheT_bact"/>
    <property type="match status" value="1"/>
</dbReference>
<dbReference type="PANTHER" id="PTHR10947:SF0">
    <property type="entry name" value="PHENYLALANINE--TRNA LIGASE BETA SUBUNIT"/>
    <property type="match status" value="1"/>
</dbReference>
<dbReference type="PANTHER" id="PTHR10947">
    <property type="entry name" value="PHENYLALANYL-TRNA SYNTHETASE BETA CHAIN AND LEUCINE-RICH REPEAT-CONTAINING PROTEIN 47"/>
    <property type="match status" value="1"/>
</dbReference>
<dbReference type="Pfam" id="PF03483">
    <property type="entry name" value="B3_4"/>
    <property type="match status" value="1"/>
</dbReference>
<dbReference type="Pfam" id="PF03484">
    <property type="entry name" value="B5"/>
    <property type="match status" value="1"/>
</dbReference>
<dbReference type="Pfam" id="PF03147">
    <property type="entry name" value="FDX-ACB"/>
    <property type="match status" value="1"/>
</dbReference>
<dbReference type="Pfam" id="PF01588">
    <property type="entry name" value="tRNA_bind"/>
    <property type="match status" value="1"/>
</dbReference>
<dbReference type="Pfam" id="PF17759">
    <property type="entry name" value="tRNA_synthFbeta"/>
    <property type="match status" value="1"/>
</dbReference>
<dbReference type="SMART" id="SM00873">
    <property type="entry name" value="B3_4"/>
    <property type="match status" value="1"/>
</dbReference>
<dbReference type="SMART" id="SM00874">
    <property type="entry name" value="B5"/>
    <property type="match status" value="1"/>
</dbReference>
<dbReference type="SMART" id="SM00896">
    <property type="entry name" value="FDX-ACB"/>
    <property type="match status" value="1"/>
</dbReference>
<dbReference type="SUPFAM" id="SSF54991">
    <property type="entry name" value="Anticodon-binding domain of PheRS"/>
    <property type="match status" value="1"/>
</dbReference>
<dbReference type="SUPFAM" id="SSF55681">
    <property type="entry name" value="Class II aaRS and biotin synthetases"/>
    <property type="match status" value="1"/>
</dbReference>
<dbReference type="SUPFAM" id="SSF50249">
    <property type="entry name" value="Nucleic acid-binding proteins"/>
    <property type="match status" value="1"/>
</dbReference>
<dbReference type="SUPFAM" id="SSF56037">
    <property type="entry name" value="PheT/TilS domain"/>
    <property type="match status" value="1"/>
</dbReference>
<dbReference type="SUPFAM" id="SSF46955">
    <property type="entry name" value="Putative DNA-binding domain"/>
    <property type="match status" value="1"/>
</dbReference>
<dbReference type="PROSITE" id="PS51483">
    <property type="entry name" value="B5"/>
    <property type="match status" value="1"/>
</dbReference>
<dbReference type="PROSITE" id="PS51447">
    <property type="entry name" value="FDX_ACB"/>
    <property type="match status" value="1"/>
</dbReference>
<dbReference type="PROSITE" id="PS50886">
    <property type="entry name" value="TRBD"/>
    <property type="match status" value="1"/>
</dbReference>
<sequence>MRLPYSWLREVVAVGASGWDVTPGELEQTLLRIGHEVEEVIPLGPVDGPVTVGRVADIEELTGYKKPIRACAVDIGDRQYREIICGATNFAVGDLVVVALPGATLPGGFTISARKAYGRNSDGMICSAAELNLGADHSGILVLPPGAAEPGADGAGVLGLDDVVFHLAITPDRGYCMSVRGLARELACAYDLDFVDPASNSRVPPLPIEGPAWPLTVQPETGVRRFALRPVIGIDPAAVSPWWLQRRLLLCGIRATCPAVDVTNYVMLELGHPMHAHDRNRISGTLGVRFARSGETAVTLDGIERKLDTADVLIVDDAATAAIGGVMGAASTEVRADSTDVLLEAAIWDPAAVSRTQRRLHLPSEAARRYERTVDPAISVAALDRCARLLADIAGGEVSPTLTDWRGDPPCDDWSPPPIRMGVDVPDRIAGVAYPQGTTARRLAQIGAVVTHDGDTLTVTPPSWRPDLRQPADLVEEVLRLEGLEVIPSVLPPAPAGRGLTAGQQRRRTIGRSLALSGYVEILPTPFLPAGVFDLWGLEADDSRRMTTRVLNPLEADRPQLATTLLPALLEALVRNVSRGLVDVALFAIAQVVQPTEQTRGVGLIPVDRRPTDDEIAMLDASLPRQPQHVAAVLAGLREPRGPWGPGRPVEAADAFEAVRIIARASRVDVTLRPAQYLPWHPGRCAQVFVGESSVGHAGQLHPAVIERSGLPKGTCAVELNLDAIPCSAPLPAPRVSPYPAVFQDVSLVVAADIPAQAVADAVRAGAGDLLEDIALFDVFTGPQIGEHRKSLTFALRFRAPDRTLTEDDASAARDAAVQSAAERVGAVLRG</sequence>
<accession>P9WFU1</accession>
<accession>L0T8W1</accession>
<accession>P94985</accession>
<evidence type="ECO:0000250" key="1"/>
<evidence type="ECO:0000305" key="2"/>
<evidence type="ECO:0007829" key="3">
    <source>
        <dbReference type="PDB" id="7DB8"/>
    </source>
</evidence>
<evidence type="ECO:0007829" key="4">
    <source>
        <dbReference type="PDB" id="7K98"/>
    </source>
</evidence>
<evidence type="ECO:0007829" key="5">
    <source>
        <dbReference type="PDB" id="7KA0"/>
    </source>
</evidence>